<organism>
    <name type="scientific">Walleye dermal sarcoma virus</name>
    <name type="common">WDSV</name>
    <dbReference type="NCBI Taxonomy" id="39720"/>
    <lineage>
        <taxon>Viruses</taxon>
        <taxon>Riboviria</taxon>
        <taxon>Pararnavirae</taxon>
        <taxon>Artverviricota</taxon>
        <taxon>Revtraviricetes</taxon>
        <taxon>Ortervirales</taxon>
        <taxon>Retroviridae</taxon>
        <taxon>Orthoretrovirinae</taxon>
        <taxon>Epsilonretrovirus</taxon>
    </lineage>
</organism>
<accession>Q88936</accession>
<protein>
    <recommendedName>
        <fullName>Protein ORF-C</fullName>
    </recommendedName>
</protein>
<name>ORFC_WDSV</name>
<feature type="chain" id="PRO_0000412273" description="Protein ORF-C">
    <location>
        <begin position="1"/>
        <end position="120"/>
    </location>
</feature>
<comment type="function">
    <text>Induces alteration of mitochondrial function that results in apoptosis contributing to tumor regression.</text>
</comment>
<comment type="subcellular location">
    <subcellularLocation>
        <location evidence="1">Host mitochondrion</location>
    </subcellularLocation>
</comment>
<organismHost>
    <name type="scientific">Sander vitreus</name>
    <name type="common">Walleye</name>
    <name type="synonym">Perca vitrea</name>
    <dbReference type="NCBI Taxonomy" id="283036"/>
</organismHost>
<keyword id="KW-0053">Apoptosis</keyword>
<keyword id="KW-1045">Host mitochondrion</keyword>
<keyword id="KW-1185">Reference proteome</keyword>
<dbReference type="EMBL" id="L41838">
    <property type="protein sequence ID" value="AAA99525.1"/>
    <property type="molecule type" value="Genomic_RNA"/>
</dbReference>
<dbReference type="EMBL" id="AF033822">
    <property type="protein sequence ID" value="AAC82606.1"/>
    <property type="molecule type" value="Genomic_RNA"/>
</dbReference>
<dbReference type="EMBL" id="EF428979">
    <property type="protein sequence ID" value="ABO25841.1"/>
    <property type="molecule type" value="Genomic_DNA"/>
</dbReference>
<dbReference type="PIR" id="T09392">
    <property type="entry name" value="T09392"/>
</dbReference>
<dbReference type="RefSeq" id="NP_045936.1">
    <property type="nucleotide sequence ID" value="NC_001867.1"/>
</dbReference>
<dbReference type="KEGG" id="vg:1403501"/>
<dbReference type="Proteomes" id="UP000007081">
    <property type="component" value="Segment"/>
</dbReference>
<dbReference type="Proteomes" id="UP000008337">
    <property type="component" value="Genome"/>
</dbReference>
<dbReference type="Proteomes" id="UP000156462">
    <property type="component" value="Genome"/>
</dbReference>
<dbReference type="GO" id="GO:0033650">
    <property type="term" value="C:host cell mitochondrion"/>
    <property type="evidence" value="ECO:0007669"/>
    <property type="project" value="UniProtKB-SubCell"/>
</dbReference>
<reference key="1">
    <citation type="journal article" date="1995" name="J. Virol.">
        <title>Nucleotide sequence and protein analysis of a complex piscine retrovirus, walleye dermal sarcoma virus.</title>
        <authorList>
            <person name="Holzschu D.L."/>
            <person name="Martineau D."/>
            <person name="Fodor S.K."/>
            <person name="Vogt V.M."/>
            <person name="Bowser P.R."/>
            <person name="Casey J.W."/>
        </authorList>
    </citation>
    <scope>NUCLEOTIDE SEQUENCE [GENOMIC RNA]</scope>
</reference>
<reference key="2">
    <citation type="journal article" date="2007" name="J. Gen. Virol.">
        <title>Establishment of productively infected walleye dermal sarcoma explant cells.</title>
        <authorList>
            <person name="Rovnak J."/>
            <person name="Casey R.N."/>
            <person name="Brewster C.D."/>
            <person name="Casey J.W."/>
            <person name="Quackenbush S.L."/>
        </authorList>
    </citation>
    <scope>NUCLEOTIDE SEQUENCE [GENOMIC DNA]</scope>
    <source>
        <strain>NY 2003</strain>
    </source>
</reference>
<reference key="3">
    <citation type="submission" date="1997-11" db="EMBL/GenBank/DDBJ databases">
        <authorList>
            <person name="Chappey C."/>
        </authorList>
    </citation>
    <scope>NUCLEOTIDE SEQUENCE [GENOMIC RNA]</scope>
</reference>
<reference key="4">
    <citation type="journal article" date="2003" name="J. Gen. Virol.">
        <title>Walleye dermal sarcoma virus Orf C is targeted to the mitochondria.</title>
        <authorList>
            <person name="Nudson W.A."/>
            <person name="Rovnak J."/>
            <person name="Buechner M."/>
            <person name="Quackenbush S.L."/>
        </authorList>
    </citation>
    <scope>SUBCELLULAR LOCATION</scope>
</reference>
<gene>
    <name type="primary">orfC</name>
</gene>
<proteinExistence type="predicted"/>
<evidence type="ECO:0000269" key="1">
    <source>
    </source>
</evidence>
<sequence>MAWYHQHRWHLDYSIPRQNLQAFLTTITFIDPQFKIQENGLTEGEYKTQIVKQIIPQLCRIPNQNSPPPIWVQGPRIKGDPTWLKINAKFITELIPKQKGTKNISTKTYLSRLFVIWLQN</sequence>